<protein>
    <recommendedName>
        <fullName evidence="1">PF03932 family protein CutC</fullName>
    </recommendedName>
</protein>
<proteinExistence type="inferred from homology"/>
<organism>
    <name type="scientific">Salmonella paratyphi A (strain ATCC 9150 / SARB42)</name>
    <dbReference type="NCBI Taxonomy" id="295319"/>
    <lineage>
        <taxon>Bacteria</taxon>
        <taxon>Pseudomonadati</taxon>
        <taxon>Pseudomonadota</taxon>
        <taxon>Gammaproteobacteria</taxon>
        <taxon>Enterobacterales</taxon>
        <taxon>Enterobacteriaceae</taxon>
        <taxon>Salmonella</taxon>
    </lineage>
</organism>
<dbReference type="EMBL" id="CP000026">
    <property type="protein sequence ID" value="AAV76937.1"/>
    <property type="molecule type" value="Genomic_DNA"/>
</dbReference>
<dbReference type="RefSeq" id="WP_001185762.1">
    <property type="nucleotide sequence ID" value="NC_006511.1"/>
</dbReference>
<dbReference type="SMR" id="Q5PMZ0"/>
<dbReference type="KEGG" id="spt:SPA0962"/>
<dbReference type="HOGENOM" id="CLU_050555_3_2_6"/>
<dbReference type="Proteomes" id="UP000008185">
    <property type="component" value="Chromosome"/>
</dbReference>
<dbReference type="GO" id="GO:0005737">
    <property type="term" value="C:cytoplasm"/>
    <property type="evidence" value="ECO:0007669"/>
    <property type="project" value="UniProtKB-SubCell"/>
</dbReference>
<dbReference type="GO" id="GO:0005507">
    <property type="term" value="F:copper ion binding"/>
    <property type="evidence" value="ECO:0007669"/>
    <property type="project" value="TreeGrafter"/>
</dbReference>
<dbReference type="FunFam" id="3.20.20.380:FF:000001">
    <property type="entry name" value="Copper homeostasis protein CutC"/>
    <property type="match status" value="1"/>
</dbReference>
<dbReference type="Gene3D" id="3.20.20.380">
    <property type="entry name" value="Copper homeostasis (CutC) domain"/>
    <property type="match status" value="1"/>
</dbReference>
<dbReference type="HAMAP" id="MF_00795">
    <property type="entry name" value="CutC"/>
    <property type="match status" value="1"/>
</dbReference>
<dbReference type="InterPro" id="IPR005627">
    <property type="entry name" value="CutC-like"/>
</dbReference>
<dbReference type="InterPro" id="IPR036822">
    <property type="entry name" value="CutC-like_dom_sf"/>
</dbReference>
<dbReference type="NCBIfam" id="NF008603">
    <property type="entry name" value="PRK11572.1"/>
    <property type="match status" value="1"/>
</dbReference>
<dbReference type="PANTHER" id="PTHR12598">
    <property type="entry name" value="COPPER HOMEOSTASIS PROTEIN CUTC"/>
    <property type="match status" value="1"/>
</dbReference>
<dbReference type="PANTHER" id="PTHR12598:SF0">
    <property type="entry name" value="COPPER HOMEOSTASIS PROTEIN CUTC HOMOLOG"/>
    <property type="match status" value="1"/>
</dbReference>
<dbReference type="Pfam" id="PF03932">
    <property type="entry name" value="CutC"/>
    <property type="match status" value="1"/>
</dbReference>
<dbReference type="SUPFAM" id="SSF110395">
    <property type="entry name" value="CutC-like"/>
    <property type="match status" value="1"/>
</dbReference>
<sequence length="248" mass="26667">MALLEICCYSMECALTAQRNGADRIELCAAPKEGGLTPSFGILRSVREHITIPVHPIIRPRGGDFYYTDGEFAAMLEDIRLVRELGFPGLVTGVLTVDGDVDMSRMEKIMTAAGPLAVTFHRAFDMCANPFNALKNLADAGVARVLTSGQKADAAQGLSIIMELIAQGDAPIIMAGAGVRANNLQNFLDAGVREVHSSAGVLLPSPMRYRNQGLSMSADIQADEYSRYRVEGAAVAEMKGIIVRHQAK</sequence>
<reference key="1">
    <citation type="journal article" date="2004" name="Nat. Genet.">
        <title>Comparison of genome degradation in Paratyphi A and Typhi, human-restricted serovars of Salmonella enterica that cause typhoid.</title>
        <authorList>
            <person name="McClelland M."/>
            <person name="Sanderson K.E."/>
            <person name="Clifton S.W."/>
            <person name="Latreille P."/>
            <person name="Porwollik S."/>
            <person name="Sabo A."/>
            <person name="Meyer R."/>
            <person name="Bieri T."/>
            <person name="Ozersky P."/>
            <person name="McLellan M."/>
            <person name="Harkins C.R."/>
            <person name="Wang C."/>
            <person name="Nguyen C."/>
            <person name="Berghoff A."/>
            <person name="Elliott G."/>
            <person name="Kohlberg S."/>
            <person name="Strong C."/>
            <person name="Du F."/>
            <person name="Carter J."/>
            <person name="Kremizki C."/>
            <person name="Layman D."/>
            <person name="Leonard S."/>
            <person name="Sun H."/>
            <person name="Fulton L."/>
            <person name="Nash W."/>
            <person name="Miner T."/>
            <person name="Minx P."/>
            <person name="Delehaunty K."/>
            <person name="Fronick C."/>
            <person name="Magrini V."/>
            <person name="Nhan M."/>
            <person name="Warren W."/>
            <person name="Florea L."/>
            <person name="Spieth J."/>
            <person name="Wilson R.K."/>
        </authorList>
    </citation>
    <scope>NUCLEOTIDE SEQUENCE [LARGE SCALE GENOMIC DNA]</scope>
    <source>
        <strain>ATCC 9150 / SARB42</strain>
    </source>
</reference>
<comment type="subunit">
    <text evidence="1">Homodimer.</text>
</comment>
<comment type="subcellular location">
    <subcellularLocation>
        <location evidence="1">Cytoplasm</location>
    </subcellularLocation>
</comment>
<comment type="similarity">
    <text evidence="1">Belongs to the CutC family.</text>
</comment>
<comment type="caution">
    <text evidence="1">Once thought to be involved in copper homeostasis, experiments in E.coli have shown this is not the case.</text>
</comment>
<gene>
    <name evidence="1" type="primary">cutC</name>
    <name type="ordered locus">SPA0962</name>
</gene>
<evidence type="ECO:0000255" key="1">
    <source>
        <dbReference type="HAMAP-Rule" id="MF_00795"/>
    </source>
</evidence>
<feature type="chain" id="PRO_1000046939" description="PF03932 family protein CutC">
    <location>
        <begin position="1"/>
        <end position="248"/>
    </location>
</feature>
<name>CUTC_SALPA</name>
<keyword id="KW-0963">Cytoplasm</keyword>
<accession>Q5PMZ0</accession>